<organism>
    <name type="scientific">Escherichia coli (strain ATCC 8739 / DSM 1576 / NBRC 3972 / NCIMB 8545 / WDCM 00012 / Crooks)</name>
    <dbReference type="NCBI Taxonomy" id="481805"/>
    <lineage>
        <taxon>Bacteria</taxon>
        <taxon>Pseudomonadati</taxon>
        <taxon>Pseudomonadota</taxon>
        <taxon>Gammaproteobacteria</taxon>
        <taxon>Enterobacterales</taxon>
        <taxon>Enterobacteriaceae</taxon>
        <taxon>Escherichia</taxon>
    </lineage>
</organism>
<comment type="function">
    <text evidence="1">Involved in the biosynthesis of the osmoprotectant glycine betaine. Catalyzes the oxidation of choline to betaine aldehyde and betaine aldehyde to glycine betaine at the same rate.</text>
</comment>
<comment type="catalytic activity">
    <reaction evidence="1">
        <text>choline + A = betaine aldehyde + AH2</text>
        <dbReference type="Rhea" id="RHEA:17433"/>
        <dbReference type="ChEBI" id="CHEBI:13193"/>
        <dbReference type="ChEBI" id="CHEBI:15354"/>
        <dbReference type="ChEBI" id="CHEBI:15710"/>
        <dbReference type="ChEBI" id="CHEBI:17499"/>
        <dbReference type="EC" id="1.1.99.1"/>
    </reaction>
</comment>
<comment type="catalytic activity">
    <reaction evidence="1">
        <text>betaine aldehyde + NAD(+) + H2O = glycine betaine + NADH + 2 H(+)</text>
        <dbReference type="Rhea" id="RHEA:15305"/>
        <dbReference type="ChEBI" id="CHEBI:15377"/>
        <dbReference type="ChEBI" id="CHEBI:15378"/>
        <dbReference type="ChEBI" id="CHEBI:15710"/>
        <dbReference type="ChEBI" id="CHEBI:17750"/>
        <dbReference type="ChEBI" id="CHEBI:57540"/>
        <dbReference type="ChEBI" id="CHEBI:57945"/>
        <dbReference type="EC" id="1.2.1.8"/>
    </reaction>
</comment>
<comment type="cofactor">
    <cofactor evidence="1">
        <name>FAD</name>
        <dbReference type="ChEBI" id="CHEBI:57692"/>
    </cofactor>
</comment>
<comment type="pathway">
    <text evidence="1">Amine and polyamine biosynthesis; betaine biosynthesis via choline pathway; betaine aldehyde from choline (cytochrome c reductase route): step 1/1.</text>
</comment>
<comment type="similarity">
    <text evidence="1">Belongs to the GMC oxidoreductase family.</text>
</comment>
<feature type="chain" id="PRO_1000083494" description="Oxygen-dependent choline dehydrogenase">
    <location>
        <begin position="1"/>
        <end position="556"/>
    </location>
</feature>
<feature type="active site" description="Proton acceptor" evidence="1">
    <location>
        <position position="473"/>
    </location>
</feature>
<feature type="binding site" evidence="1">
    <location>
        <begin position="4"/>
        <end position="33"/>
    </location>
    <ligand>
        <name>FAD</name>
        <dbReference type="ChEBI" id="CHEBI:57692"/>
    </ligand>
</feature>
<keyword id="KW-0274">FAD</keyword>
<keyword id="KW-0285">Flavoprotein</keyword>
<keyword id="KW-0520">NAD</keyword>
<keyword id="KW-0560">Oxidoreductase</keyword>
<evidence type="ECO:0000255" key="1">
    <source>
        <dbReference type="HAMAP-Rule" id="MF_00750"/>
    </source>
</evidence>
<gene>
    <name evidence="1" type="primary">betA</name>
    <name type="ordered locus">EcolC_3312</name>
</gene>
<proteinExistence type="inferred from homology"/>
<reference key="1">
    <citation type="submission" date="2008-02" db="EMBL/GenBank/DDBJ databases">
        <title>Complete sequence of Escherichia coli C str. ATCC 8739.</title>
        <authorList>
            <person name="Copeland A."/>
            <person name="Lucas S."/>
            <person name="Lapidus A."/>
            <person name="Glavina del Rio T."/>
            <person name="Dalin E."/>
            <person name="Tice H."/>
            <person name="Bruce D."/>
            <person name="Goodwin L."/>
            <person name="Pitluck S."/>
            <person name="Kiss H."/>
            <person name="Brettin T."/>
            <person name="Detter J.C."/>
            <person name="Han C."/>
            <person name="Kuske C.R."/>
            <person name="Schmutz J."/>
            <person name="Larimer F."/>
            <person name="Land M."/>
            <person name="Hauser L."/>
            <person name="Kyrpides N."/>
            <person name="Mikhailova N."/>
            <person name="Ingram L."/>
            <person name="Richardson P."/>
        </authorList>
    </citation>
    <scope>NUCLEOTIDE SEQUENCE [LARGE SCALE GENOMIC DNA]</scope>
    <source>
        <strain>ATCC 8739 / DSM 1576 / NBRC 3972 / NCIMB 8545 / WDCM 00012 / Crooks</strain>
    </source>
</reference>
<accession>B1J0W6</accession>
<dbReference type="EC" id="1.1.99.1" evidence="1"/>
<dbReference type="EC" id="1.2.1.8" evidence="1"/>
<dbReference type="EMBL" id="CP000946">
    <property type="protein sequence ID" value="ACA78934.1"/>
    <property type="molecule type" value="Genomic_DNA"/>
</dbReference>
<dbReference type="RefSeq" id="WP_001159094.1">
    <property type="nucleotide sequence ID" value="NZ_MTFT01000010.1"/>
</dbReference>
<dbReference type="SMR" id="B1J0W6"/>
<dbReference type="KEGG" id="ecl:EcolC_3312"/>
<dbReference type="HOGENOM" id="CLU_002865_7_1_6"/>
<dbReference type="UniPathway" id="UPA00529">
    <property type="reaction ID" value="UER00385"/>
</dbReference>
<dbReference type="GO" id="GO:0016020">
    <property type="term" value="C:membrane"/>
    <property type="evidence" value="ECO:0007669"/>
    <property type="project" value="TreeGrafter"/>
</dbReference>
<dbReference type="GO" id="GO:0008802">
    <property type="term" value="F:betaine-aldehyde dehydrogenase (NAD+) activity"/>
    <property type="evidence" value="ECO:0007669"/>
    <property type="project" value="UniProtKB-EC"/>
</dbReference>
<dbReference type="GO" id="GO:0008812">
    <property type="term" value="F:choline dehydrogenase activity"/>
    <property type="evidence" value="ECO:0007669"/>
    <property type="project" value="UniProtKB-UniRule"/>
</dbReference>
<dbReference type="GO" id="GO:0050660">
    <property type="term" value="F:flavin adenine dinucleotide binding"/>
    <property type="evidence" value="ECO:0007669"/>
    <property type="project" value="InterPro"/>
</dbReference>
<dbReference type="GO" id="GO:0019285">
    <property type="term" value="P:glycine betaine biosynthetic process from choline"/>
    <property type="evidence" value="ECO:0007669"/>
    <property type="project" value="UniProtKB-UniRule"/>
</dbReference>
<dbReference type="Gene3D" id="3.50.50.60">
    <property type="entry name" value="FAD/NAD(P)-binding domain"/>
    <property type="match status" value="1"/>
</dbReference>
<dbReference type="Gene3D" id="3.30.560.10">
    <property type="entry name" value="Glucose Oxidase, domain 3"/>
    <property type="match status" value="1"/>
</dbReference>
<dbReference type="HAMAP" id="MF_00750">
    <property type="entry name" value="Choline_dehydrogen"/>
    <property type="match status" value="1"/>
</dbReference>
<dbReference type="InterPro" id="IPR011533">
    <property type="entry name" value="BetA"/>
</dbReference>
<dbReference type="InterPro" id="IPR036188">
    <property type="entry name" value="FAD/NAD-bd_sf"/>
</dbReference>
<dbReference type="InterPro" id="IPR012132">
    <property type="entry name" value="GMC_OxRdtase"/>
</dbReference>
<dbReference type="InterPro" id="IPR000172">
    <property type="entry name" value="GMC_OxRdtase_N"/>
</dbReference>
<dbReference type="InterPro" id="IPR007867">
    <property type="entry name" value="GMC_OxRtase_C"/>
</dbReference>
<dbReference type="NCBIfam" id="TIGR01810">
    <property type="entry name" value="betA"/>
    <property type="match status" value="1"/>
</dbReference>
<dbReference type="NCBIfam" id="NF002550">
    <property type="entry name" value="PRK02106.1"/>
    <property type="match status" value="1"/>
</dbReference>
<dbReference type="PANTHER" id="PTHR11552:SF147">
    <property type="entry name" value="CHOLINE DEHYDROGENASE, MITOCHONDRIAL"/>
    <property type="match status" value="1"/>
</dbReference>
<dbReference type="PANTHER" id="PTHR11552">
    <property type="entry name" value="GLUCOSE-METHANOL-CHOLINE GMC OXIDOREDUCTASE"/>
    <property type="match status" value="1"/>
</dbReference>
<dbReference type="Pfam" id="PF05199">
    <property type="entry name" value="GMC_oxred_C"/>
    <property type="match status" value="1"/>
</dbReference>
<dbReference type="Pfam" id="PF00732">
    <property type="entry name" value="GMC_oxred_N"/>
    <property type="match status" value="1"/>
</dbReference>
<dbReference type="PIRSF" id="PIRSF000137">
    <property type="entry name" value="Alcohol_oxidase"/>
    <property type="match status" value="1"/>
</dbReference>
<dbReference type="SUPFAM" id="SSF54373">
    <property type="entry name" value="FAD-linked reductases, C-terminal domain"/>
    <property type="match status" value="1"/>
</dbReference>
<dbReference type="SUPFAM" id="SSF51905">
    <property type="entry name" value="FAD/NAD(P)-binding domain"/>
    <property type="match status" value="1"/>
</dbReference>
<dbReference type="PROSITE" id="PS00623">
    <property type="entry name" value="GMC_OXRED_1"/>
    <property type="match status" value="1"/>
</dbReference>
<dbReference type="PROSITE" id="PS00624">
    <property type="entry name" value="GMC_OXRED_2"/>
    <property type="match status" value="1"/>
</dbReference>
<sequence>MQFDYIIIGAGSAGNVLATRLTEDPNTSVLLLEAGGPDYRFDFRTQMPAALAFPLQGKRYNWAYETEPEPFMNNRRMECGRGKGLGGSSLINGMCYIRGNALDLDNWAQEPGLENWSYLDCLPYYRKAETRDMGENDYHGGDGPVSVTTSKPGVNPLFEAMIEAGVQAGYPRTDDLNGYQQEGFGPMDRTVTPQGRRASTARGYLDQAKSRPNLTIRTHAMTDHIIFDGKRAVGVEWLEGDSTIPTRATANKEVLLCAGAIASPQILQRSGVGNAELLAEFDIPLVHELPGVGENLQDHLEMYLQYECKEPVSLYPALQWWNQPKIGAEWLFGGTGVGASNHFEAGGFIRSREEFAWPNIQYHFLPVAINYNGSNAVKEHGFQCHVGSMRSPSRGHVRIKSRDPHQHPAILFNYMSHEQDWQEFRDAIRITREIMHQPALDQYRGREISPGVECQTDEQLDEFVRNHAETAFHPCGTCKMGYDEMSVVDGEGRVHGLEGLRVVDASIMPQIITGNLNATTIMIGEKIADMIRGQEALPRSTAGYFVANGMPVRAKK</sequence>
<name>BETA_ECOLC</name>
<protein>
    <recommendedName>
        <fullName evidence="1">Oxygen-dependent choline dehydrogenase</fullName>
        <shortName evidence="1">CDH</shortName>
        <shortName evidence="1">CHD</shortName>
        <ecNumber evidence="1">1.1.99.1</ecNumber>
    </recommendedName>
    <alternativeName>
        <fullName evidence="1">Betaine aldehyde dehydrogenase</fullName>
        <shortName evidence="1">BADH</shortName>
        <ecNumber evidence="1">1.2.1.8</ecNumber>
    </alternativeName>
</protein>